<comment type="function">
    <text evidence="1">Major role in the synthesis of nucleoside triphosphates other than ATP. The ATP gamma phosphate is transferred to the NDP beta phosphate via a ping-pong mechanism, using a phosphorylated active-site intermediate.</text>
</comment>
<comment type="catalytic activity">
    <reaction evidence="1">
        <text>a 2'-deoxyribonucleoside 5'-diphosphate + ATP = a 2'-deoxyribonucleoside 5'-triphosphate + ADP</text>
        <dbReference type="Rhea" id="RHEA:44640"/>
        <dbReference type="ChEBI" id="CHEBI:30616"/>
        <dbReference type="ChEBI" id="CHEBI:61560"/>
        <dbReference type="ChEBI" id="CHEBI:73316"/>
        <dbReference type="ChEBI" id="CHEBI:456216"/>
        <dbReference type="EC" id="2.7.4.6"/>
    </reaction>
</comment>
<comment type="catalytic activity">
    <reaction evidence="1">
        <text>a ribonucleoside 5'-diphosphate + ATP = a ribonucleoside 5'-triphosphate + ADP</text>
        <dbReference type="Rhea" id="RHEA:18113"/>
        <dbReference type="ChEBI" id="CHEBI:30616"/>
        <dbReference type="ChEBI" id="CHEBI:57930"/>
        <dbReference type="ChEBI" id="CHEBI:61557"/>
        <dbReference type="ChEBI" id="CHEBI:456216"/>
        <dbReference type="EC" id="2.7.4.6"/>
    </reaction>
</comment>
<comment type="cofactor">
    <cofactor evidence="1">
        <name>Mg(2+)</name>
        <dbReference type="ChEBI" id="CHEBI:18420"/>
    </cofactor>
</comment>
<comment type="subunit">
    <text evidence="1">Homotetramer.</text>
</comment>
<comment type="subcellular location">
    <subcellularLocation>
        <location evidence="1">Cytoplasm</location>
    </subcellularLocation>
</comment>
<comment type="similarity">
    <text evidence="1">Belongs to the NDK family.</text>
</comment>
<protein>
    <recommendedName>
        <fullName evidence="1">Nucleoside diphosphate kinase</fullName>
        <shortName evidence="1">NDK</shortName>
        <shortName evidence="1">NDP kinase</shortName>
        <ecNumber evidence="1">2.7.4.6</ecNumber>
    </recommendedName>
    <alternativeName>
        <fullName evidence="1">Nucleoside-2-P kinase</fullName>
    </alternativeName>
</protein>
<reference key="1">
    <citation type="journal article" date="2008" name="J. Bacteriol.">
        <title>The complete genome sequence of Escherichia coli DH10B: insights into the biology of a laboratory workhorse.</title>
        <authorList>
            <person name="Durfee T."/>
            <person name="Nelson R."/>
            <person name="Baldwin S."/>
            <person name="Plunkett G. III"/>
            <person name="Burland V."/>
            <person name="Mau B."/>
            <person name="Petrosino J.F."/>
            <person name="Qin X."/>
            <person name="Muzny D.M."/>
            <person name="Ayele M."/>
            <person name="Gibbs R.A."/>
            <person name="Csorgo B."/>
            <person name="Posfai G."/>
            <person name="Weinstock G.M."/>
            <person name="Blattner F.R."/>
        </authorList>
    </citation>
    <scope>NUCLEOTIDE SEQUENCE [LARGE SCALE GENOMIC DNA]</scope>
    <source>
        <strain>K12 / DH10B</strain>
    </source>
</reference>
<proteinExistence type="inferred from homology"/>
<keyword id="KW-0067">ATP-binding</keyword>
<keyword id="KW-0963">Cytoplasm</keyword>
<keyword id="KW-0418">Kinase</keyword>
<keyword id="KW-0460">Magnesium</keyword>
<keyword id="KW-0479">Metal-binding</keyword>
<keyword id="KW-0546">Nucleotide metabolism</keyword>
<keyword id="KW-0547">Nucleotide-binding</keyword>
<keyword id="KW-0597">Phosphoprotein</keyword>
<keyword id="KW-0808">Transferase</keyword>
<dbReference type="EC" id="2.7.4.6" evidence="1"/>
<dbReference type="EMBL" id="CP000948">
    <property type="protein sequence ID" value="ACB03670.1"/>
    <property type="molecule type" value="Genomic_DNA"/>
</dbReference>
<dbReference type="RefSeq" id="WP_000963837.1">
    <property type="nucleotide sequence ID" value="NC_010473.1"/>
</dbReference>
<dbReference type="SMR" id="B1XAZ3"/>
<dbReference type="GeneID" id="93774618"/>
<dbReference type="KEGG" id="ecd:ECDH10B_2684"/>
<dbReference type="HOGENOM" id="CLU_060216_8_1_6"/>
<dbReference type="GO" id="GO:0005737">
    <property type="term" value="C:cytoplasm"/>
    <property type="evidence" value="ECO:0007669"/>
    <property type="project" value="UniProtKB-SubCell"/>
</dbReference>
<dbReference type="GO" id="GO:0005524">
    <property type="term" value="F:ATP binding"/>
    <property type="evidence" value="ECO:0007669"/>
    <property type="project" value="UniProtKB-UniRule"/>
</dbReference>
<dbReference type="GO" id="GO:0046872">
    <property type="term" value="F:metal ion binding"/>
    <property type="evidence" value="ECO:0007669"/>
    <property type="project" value="UniProtKB-KW"/>
</dbReference>
<dbReference type="GO" id="GO:0004550">
    <property type="term" value="F:nucleoside diphosphate kinase activity"/>
    <property type="evidence" value="ECO:0007669"/>
    <property type="project" value="UniProtKB-UniRule"/>
</dbReference>
<dbReference type="GO" id="GO:0006241">
    <property type="term" value="P:CTP biosynthetic process"/>
    <property type="evidence" value="ECO:0007669"/>
    <property type="project" value="UniProtKB-UniRule"/>
</dbReference>
<dbReference type="GO" id="GO:0006183">
    <property type="term" value="P:GTP biosynthetic process"/>
    <property type="evidence" value="ECO:0007669"/>
    <property type="project" value="UniProtKB-UniRule"/>
</dbReference>
<dbReference type="GO" id="GO:0006228">
    <property type="term" value="P:UTP biosynthetic process"/>
    <property type="evidence" value="ECO:0007669"/>
    <property type="project" value="UniProtKB-UniRule"/>
</dbReference>
<dbReference type="CDD" id="cd04413">
    <property type="entry name" value="NDPk_I"/>
    <property type="match status" value="1"/>
</dbReference>
<dbReference type="FunFam" id="3.30.70.141:FF:000001">
    <property type="entry name" value="Nucleoside diphosphate kinase"/>
    <property type="match status" value="1"/>
</dbReference>
<dbReference type="Gene3D" id="3.30.70.141">
    <property type="entry name" value="Nucleoside diphosphate kinase-like domain"/>
    <property type="match status" value="1"/>
</dbReference>
<dbReference type="HAMAP" id="MF_00451">
    <property type="entry name" value="NDP_kinase"/>
    <property type="match status" value="1"/>
</dbReference>
<dbReference type="InterPro" id="IPR034907">
    <property type="entry name" value="NDK-like_dom"/>
</dbReference>
<dbReference type="InterPro" id="IPR036850">
    <property type="entry name" value="NDK-like_dom_sf"/>
</dbReference>
<dbReference type="InterPro" id="IPR001564">
    <property type="entry name" value="Nucleoside_diP_kinase"/>
</dbReference>
<dbReference type="InterPro" id="IPR023005">
    <property type="entry name" value="Nucleoside_diP_kinase_AS"/>
</dbReference>
<dbReference type="NCBIfam" id="NF001908">
    <property type="entry name" value="PRK00668.1"/>
    <property type="match status" value="1"/>
</dbReference>
<dbReference type="PANTHER" id="PTHR46161">
    <property type="entry name" value="NUCLEOSIDE DIPHOSPHATE KINASE"/>
    <property type="match status" value="1"/>
</dbReference>
<dbReference type="PANTHER" id="PTHR46161:SF3">
    <property type="entry name" value="NUCLEOSIDE DIPHOSPHATE KINASE DDB_G0292928-RELATED"/>
    <property type="match status" value="1"/>
</dbReference>
<dbReference type="Pfam" id="PF00334">
    <property type="entry name" value="NDK"/>
    <property type="match status" value="1"/>
</dbReference>
<dbReference type="PRINTS" id="PR01243">
    <property type="entry name" value="NUCDPKINASE"/>
</dbReference>
<dbReference type="SMART" id="SM00562">
    <property type="entry name" value="NDK"/>
    <property type="match status" value="1"/>
</dbReference>
<dbReference type="SUPFAM" id="SSF54919">
    <property type="entry name" value="Nucleoside diphosphate kinase, NDK"/>
    <property type="match status" value="1"/>
</dbReference>
<dbReference type="PROSITE" id="PS00469">
    <property type="entry name" value="NDPK"/>
    <property type="match status" value="1"/>
</dbReference>
<dbReference type="PROSITE" id="PS51374">
    <property type="entry name" value="NDPK_LIKE"/>
    <property type="match status" value="1"/>
</dbReference>
<accession>B1XAZ3</accession>
<gene>
    <name evidence="1" type="primary">ndk</name>
    <name type="ordered locus">ECDH10B_2684</name>
</gene>
<evidence type="ECO:0000255" key="1">
    <source>
        <dbReference type="HAMAP-Rule" id="MF_00451"/>
    </source>
</evidence>
<name>NDK_ECODH</name>
<sequence>MAIERTFSIIKPNAVAKNVIGNIFARFEAAGFKIVGTKMLHLTVEQARGFYAEHDGKPFFDGLVEFMTSGPIVVSVLEGENAVQRHRDLLGATNPANALAGTLRADYADSLTENGTHGSDSVESAAREIAYFFGEGEVCPRTR</sequence>
<organism>
    <name type="scientific">Escherichia coli (strain K12 / DH10B)</name>
    <dbReference type="NCBI Taxonomy" id="316385"/>
    <lineage>
        <taxon>Bacteria</taxon>
        <taxon>Pseudomonadati</taxon>
        <taxon>Pseudomonadota</taxon>
        <taxon>Gammaproteobacteria</taxon>
        <taxon>Enterobacterales</taxon>
        <taxon>Enterobacteriaceae</taxon>
        <taxon>Escherichia</taxon>
    </lineage>
</organism>
<feature type="chain" id="PRO_1000124960" description="Nucleoside diphosphate kinase">
    <location>
        <begin position="1"/>
        <end position="143"/>
    </location>
</feature>
<feature type="active site" description="Pros-phosphohistidine intermediate" evidence="1">
    <location>
        <position position="117"/>
    </location>
</feature>
<feature type="binding site" evidence="1">
    <location>
        <position position="11"/>
    </location>
    <ligand>
        <name>ATP</name>
        <dbReference type="ChEBI" id="CHEBI:30616"/>
    </ligand>
</feature>
<feature type="binding site" evidence="1">
    <location>
        <position position="59"/>
    </location>
    <ligand>
        <name>ATP</name>
        <dbReference type="ChEBI" id="CHEBI:30616"/>
    </ligand>
</feature>
<feature type="binding site" evidence="1">
    <location>
        <position position="87"/>
    </location>
    <ligand>
        <name>ATP</name>
        <dbReference type="ChEBI" id="CHEBI:30616"/>
    </ligand>
</feature>
<feature type="binding site" evidence="1">
    <location>
        <position position="93"/>
    </location>
    <ligand>
        <name>ATP</name>
        <dbReference type="ChEBI" id="CHEBI:30616"/>
    </ligand>
</feature>
<feature type="binding site" evidence="1">
    <location>
        <position position="104"/>
    </location>
    <ligand>
        <name>ATP</name>
        <dbReference type="ChEBI" id="CHEBI:30616"/>
    </ligand>
</feature>
<feature type="binding site" evidence="1">
    <location>
        <position position="114"/>
    </location>
    <ligand>
        <name>ATP</name>
        <dbReference type="ChEBI" id="CHEBI:30616"/>
    </ligand>
</feature>